<accession>P12544</accession>
<accession>A4PHN1</accession>
<accession>Q6IB36</accession>
<dbReference type="EC" id="3.4.21.78" evidence="7 14 18 19"/>
<dbReference type="EMBL" id="M18737">
    <property type="protein sequence ID" value="AAA52647.1"/>
    <property type="molecule type" value="mRNA"/>
</dbReference>
<dbReference type="EMBL" id="CR456968">
    <property type="protein sequence ID" value="CAG33249.1"/>
    <property type="molecule type" value="mRNA"/>
</dbReference>
<dbReference type="EMBL" id="AC091977">
    <property type="status" value="NOT_ANNOTATED_CDS"/>
    <property type="molecule type" value="Genomic_DNA"/>
</dbReference>
<dbReference type="EMBL" id="BC015739">
    <property type="protein sequence ID" value="AAH15739.1"/>
    <property type="molecule type" value="mRNA"/>
</dbReference>
<dbReference type="EMBL" id="AB284134">
    <property type="protein sequence ID" value="BAF56159.1"/>
    <property type="molecule type" value="mRNA"/>
</dbReference>
<dbReference type="EMBL" id="U40006">
    <property type="protein sequence ID" value="AAD00009.1"/>
    <property type="molecule type" value="Genomic_DNA"/>
</dbReference>
<dbReference type="CCDS" id="CCDS3965.1">
    <molecule id="P12544-1"/>
</dbReference>
<dbReference type="PIR" id="A31372">
    <property type="entry name" value="A31372"/>
</dbReference>
<dbReference type="RefSeq" id="NP_006135.2">
    <molecule id="P12544-1"/>
    <property type="nucleotide sequence ID" value="NM_006144.4"/>
</dbReference>
<dbReference type="PDB" id="1OP8">
    <property type="method" value="X-ray"/>
    <property type="resolution" value="2.50 A"/>
    <property type="chains" value="A/B/C/D/E/F=29-262"/>
</dbReference>
<dbReference type="PDB" id="1ORF">
    <property type="method" value="X-ray"/>
    <property type="resolution" value="2.40 A"/>
    <property type="chains" value="A=29-262"/>
</dbReference>
<dbReference type="PDBsum" id="1OP8"/>
<dbReference type="PDBsum" id="1ORF"/>
<dbReference type="SMR" id="P12544"/>
<dbReference type="BioGRID" id="109256">
    <property type="interactions" value="17"/>
</dbReference>
<dbReference type="FunCoup" id="P12544">
    <property type="interactions" value="467"/>
</dbReference>
<dbReference type="IntAct" id="P12544">
    <property type="interactions" value="4"/>
</dbReference>
<dbReference type="STRING" id="9606.ENSP00000274306"/>
<dbReference type="ChEMBL" id="CHEMBL4307"/>
<dbReference type="MEROPS" id="S01.135"/>
<dbReference type="GlyCosmos" id="P12544">
    <property type="glycosylation" value="1 site, No reported glycans"/>
</dbReference>
<dbReference type="GlyGen" id="P12544">
    <property type="glycosylation" value="1 site, 8 N-linked glycans (1 site)"/>
</dbReference>
<dbReference type="iPTMnet" id="P12544"/>
<dbReference type="PhosphoSitePlus" id="P12544"/>
<dbReference type="BioMuta" id="GZMA"/>
<dbReference type="DMDM" id="317373360"/>
<dbReference type="MassIVE" id="P12544"/>
<dbReference type="PaxDb" id="9606-ENSP00000274306"/>
<dbReference type="PeptideAtlas" id="P12544"/>
<dbReference type="ProteomicsDB" id="52858">
    <molecule id="P12544-1"/>
</dbReference>
<dbReference type="ProteomicsDB" id="52859">
    <molecule id="P12544-2"/>
</dbReference>
<dbReference type="Antibodypedia" id="11050">
    <property type="antibodies" value="384 antibodies from 40 providers"/>
</dbReference>
<dbReference type="CPTC" id="P12544">
    <property type="antibodies" value="1 antibody"/>
</dbReference>
<dbReference type="DNASU" id="3001"/>
<dbReference type="Ensembl" id="ENST00000274306.7">
    <molecule id="P12544-1"/>
    <property type="protein sequence ID" value="ENSP00000274306.6"/>
    <property type="gene ID" value="ENSG00000145649.8"/>
</dbReference>
<dbReference type="GeneID" id="3001"/>
<dbReference type="KEGG" id="hsa:3001"/>
<dbReference type="MANE-Select" id="ENST00000274306.7">
    <property type="protein sequence ID" value="ENSP00000274306.6"/>
    <property type="RefSeq nucleotide sequence ID" value="NM_006144.4"/>
    <property type="RefSeq protein sequence ID" value="NP_006135.2"/>
</dbReference>
<dbReference type="UCSC" id="uc003jpm.4">
    <molecule id="P12544-1"/>
    <property type="organism name" value="human"/>
</dbReference>
<dbReference type="AGR" id="HGNC:4708"/>
<dbReference type="CTD" id="3001"/>
<dbReference type="DisGeNET" id="3001"/>
<dbReference type="GeneCards" id="GZMA"/>
<dbReference type="HGNC" id="HGNC:4708">
    <property type="gene designation" value="GZMA"/>
</dbReference>
<dbReference type="HPA" id="ENSG00000145649">
    <property type="expression patterns" value="Tissue enhanced (lymphoid)"/>
</dbReference>
<dbReference type="MIM" id="140050">
    <property type="type" value="gene"/>
</dbReference>
<dbReference type="neXtProt" id="NX_P12544"/>
<dbReference type="OpenTargets" id="ENSG00000145649"/>
<dbReference type="PharmGKB" id="PA29086"/>
<dbReference type="VEuPathDB" id="HostDB:ENSG00000145649"/>
<dbReference type="eggNOG" id="KOG3627">
    <property type="taxonomic scope" value="Eukaryota"/>
</dbReference>
<dbReference type="GeneTree" id="ENSGT00940000159928"/>
<dbReference type="HOGENOM" id="CLU_006842_1_0_1"/>
<dbReference type="InParanoid" id="P12544"/>
<dbReference type="OMA" id="YPCYDPA"/>
<dbReference type="OrthoDB" id="6755574at2759"/>
<dbReference type="PAN-GO" id="P12544">
    <property type="GO annotations" value="2 GO annotations based on evolutionary models"/>
</dbReference>
<dbReference type="PhylomeDB" id="P12544"/>
<dbReference type="TreeFam" id="TF333630"/>
<dbReference type="BRENDA" id="3.4.21.78">
    <property type="organism ID" value="2681"/>
</dbReference>
<dbReference type="PathwayCommons" id="P12544"/>
<dbReference type="SignaLink" id="P12544"/>
<dbReference type="SIGNOR" id="P12544"/>
<dbReference type="BioGRID-ORCS" id="3001">
    <property type="hits" value="15 hits in 1148 CRISPR screens"/>
</dbReference>
<dbReference type="EvolutionaryTrace" id="P12544"/>
<dbReference type="GeneWiki" id="GZMA"/>
<dbReference type="GenomeRNAi" id="3001"/>
<dbReference type="Pharos" id="P12544">
    <property type="development level" value="Tbio"/>
</dbReference>
<dbReference type="PRO" id="PR:P12544"/>
<dbReference type="Proteomes" id="UP000005640">
    <property type="component" value="Chromosome 5"/>
</dbReference>
<dbReference type="RNAct" id="P12544">
    <property type="molecule type" value="protein"/>
</dbReference>
<dbReference type="Bgee" id="ENSG00000145649">
    <property type="expression patterns" value="Expressed in granulocyte and 140 other cell types or tissues"/>
</dbReference>
<dbReference type="GO" id="GO:0005737">
    <property type="term" value="C:cytoplasm"/>
    <property type="evidence" value="ECO:0000314"/>
    <property type="project" value="UniProt"/>
</dbReference>
<dbReference type="GO" id="GO:0005615">
    <property type="term" value="C:extracellular space"/>
    <property type="evidence" value="ECO:0000318"/>
    <property type="project" value="GO_Central"/>
</dbReference>
<dbReference type="GO" id="GO:0001772">
    <property type="term" value="C:immunological synapse"/>
    <property type="evidence" value="ECO:0000304"/>
    <property type="project" value="UniProtKB"/>
</dbReference>
<dbReference type="GO" id="GO:0005634">
    <property type="term" value="C:nucleus"/>
    <property type="evidence" value="ECO:0000304"/>
    <property type="project" value="UniProtKB"/>
</dbReference>
<dbReference type="GO" id="GO:0042803">
    <property type="term" value="F:protein homodimerization activity"/>
    <property type="evidence" value="ECO:0000314"/>
    <property type="project" value="UniProtKB"/>
</dbReference>
<dbReference type="GO" id="GO:0004252">
    <property type="term" value="F:serine-type endopeptidase activity"/>
    <property type="evidence" value="ECO:0000314"/>
    <property type="project" value="UniProtKB"/>
</dbReference>
<dbReference type="GO" id="GO:0006915">
    <property type="term" value="P:apoptotic process"/>
    <property type="evidence" value="ECO:0000304"/>
    <property type="project" value="UniProtKB"/>
</dbReference>
<dbReference type="GO" id="GO:1902483">
    <property type="term" value="P:cytotoxic T cell pyroptotic cell death"/>
    <property type="evidence" value="ECO:0000314"/>
    <property type="project" value="UniProtKB"/>
</dbReference>
<dbReference type="GO" id="GO:0140507">
    <property type="term" value="P:granzyme-mediated programmed cell death signaling pathway"/>
    <property type="evidence" value="ECO:0000314"/>
    <property type="project" value="UniProtKB"/>
</dbReference>
<dbReference type="GO" id="GO:0006955">
    <property type="term" value="P:immune response"/>
    <property type="evidence" value="ECO:0000304"/>
    <property type="project" value="UniProtKB"/>
</dbReference>
<dbReference type="GO" id="GO:0031640">
    <property type="term" value="P:killing of cells of another organism"/>
    <property type="evidence" value="ECO:0007669"/>
    <property type="project" value="UniProtKB-KW"/>
</dbReference>
<dbReference type="GO" id="GO:0043392">
    <property type="term" value="P:negative regulation of DNA binding"/>
    <property type="evidence" value="ECO:0000314"/>
    <property type="project" value="UniProtKB"/>
</dbReference>
<dbReference type="GO" id="GO:0032078">
    <property type="term" value="P:negative regulation of endodeoxyribonuclease activity"/>
    <property type="evidence" value="ECO:0000314"/>
    <property type="project" value="UniProtKB"/>
</dbReference>
<dbReference type="GO" id="GO:0051354">
    <property type="term" value="P:negative regulation of oxidoreductase activity"/>
    <property type="evidence" value="ECO:0000314"/>
    <property type="project" value="UniProtKB"/>
</dbReference>
<dbReference type="GO" id="GO:0043065">
    <property type="term" value="P:positive regulation of apoptotic process"/>
    <property type="evidence" value="ECO:0000314"/>
    <property type="project" value="UniProtKB"/>
</dbReference>
<dbReference type="GO" id="GO:0051604">
    <property type="term" value="P:protein maturation"/>
    <property type="evidence" value="ECO:0000314"/>
    <property type="project" value="UniProt"/>
</dbReference>
<dbReference type="GO" id="GO:0051603">
    <property type="term" value="P:proteolysis involved in protein catabolic process"/>
    <property type="evidence" value="ECO:0000314"/>
    <property type="project" value="UniProtKB"/>
</dbReference>
<dbReference type="GO" id="GO:0070269">
    <property type="term" value="P:pyroptotic inflammatory response"/>
    <property type="evidence" value="ECO:0000314"/>
    <property type="project" value="UniProtKB"/>
</dbReference>
<dbReference type="GO" id="GO:0009617">
    <property type="term" value="P:response to bacterium"/>
    <property type="evidence" value="ECO:0007669"/>
    <property type="project" value="Ensembl"/>
</dbReference>
<dbReference type="CDD" id="cd00190">
    <property type="entry name" value="Tryp_SPc"/>
    <property type="match status" value="1"/>
</dbReference>
<dbReference type="FunFam" id="2.40.10.10:FF:000120">
    <property type="entry name" value="Putative serine protease"/>
    <property type="match status" value="1"/>
</dbReference>
<dbReference type="Gene3D" id="2.40.10.10">
    <property type="entry name" value="Trypsin-like serine proteases"/>
    <property type="match status" value="2"/>
</dbReference>
<dbReference type="InterPro" id="IPR009003">
    <property type="entry name" value="Peptidase_S1_PA"/>
</dbReference>
<dbReference type="InterPro" id="IPR043504">
    <property type="entry name" value="Peptidase_S1_PA_chymotrypsin"/>
</dbReference>
<dbReference type="InterPro" id="IPR001314">
    <property type="entry name" value="Peptidase_S1A"/>
</dbReference>
<dbReference type="InterPro" id="IPR001254">
    <property type="entry name" value="Trypsin_dom"/>
</dbReference>
<dbReference type="InterPro" id="IPR018114">
    <property type="entry name" value="TRYPSIN_HIS"/>
</dbReference>
<dbReference type="InterPro" id="IPR033116">
    <property type="entry name" value="TRYPSIN_SER"/>
</dbReference>
<dbReference type="PANTHER" id="PTHR24271:SF69">
    <property type="entry name" value="GRANZYME A"/>
    <property type="match status" value="1"/>
</dbReference>
<dbReference type="PANTHER" id="PTHR24271">
    <property type="entry name" value="KALLIKREIN-RELATED"/>
    <property type="match status" value="1"/>
</dbReference>
<dbReference type="Pfam" id="PF00089">
    <property type="entry name" value="Trypsin"/>
    <property type="match status" value="1"/>
</dbReference>
<dbReference type="PRINTS" id="PR00722">
    <property type="entry name" value="CHYMOTRYPSIN"/>
</dbReference>
<dbReference type="SMART" id="SM00020">
    <property type="entry name" value="Tryp_SPc"/>
    <property type="match status" value="1"/>
</dbReference>
<dbReference type="SUPFAM" id="SSF50494">
    <property type="entry name" value="Trypsin-like serine proteases"/>
    <property type="match status" value="1"/>
</dbReference>
<dbReference type="PROSITE" id="PS50240">
    <property type="entry name" value="TRYPSIN_DOM"/>
    <property type="match status" value="1"/>
</dbReference>
<dbReference type="PROSITE" id="PS00134">
    <property type="entry name" value="TRYPSIN_HIS"/>
    <property type="match status" value="1"/>
</dbReference>
<dbReference type="PROSITE" id="PS00135">
    <property type="entry name" value="TRYPSIN_SER"/>
    <property type="match status" value="1"/>
</dbReference>
<protein>
    <recommendedName>
        <fullName evidence="27">Granzyme A</fullName>
        <ecNumber evidence="7 14 18 19">3.4.21.78</ecNumber>
    </recommendedName>
    <alternativeName>
        <fullName evidence="23">CTL tryptase</fullName>
    </alternativeName>
    <alternativeName>
        <fullName evidence="23">Cytotoxic T-lymphocyte proteinase 1</fullName>
    </alternativeName>
    <alternativeName>
        <fullName>Fragmentin-1</fullName>
    </alternativeName>
    <alternativeName>
        <fullName evidence="26">Granzyme-1</fullName>
    </alternativeName>
    <alternativeName>
        <fullName evidence="25">Hanukkah factor</fullName>
        <shortName evidence="25">H factor</shortName>
        <shortName evidence="25">HF</shortName>
    </alternativeName>
</protein>
<comment type="function">
    <text evidence="3 4 5 7 9 14 15 16 17 18 19 20">Abundant protease in the cytosolic granules of cytotoxic T-cells and NK-cells which activates caspase-independent pyroptosis when delivered into the target cell through the immunological synapse (PubMed:12819770, PubMed:32299851, PubMed:3257574, PubMed:3262682, PubMed:3263427). It cleaves after Lys or Arg (PubMed:12819770, PubMed:32299851). Once delivered into the target cell, acts by catalyzing cleavage of gasdermin-B (GSDMB), releasing the pore-forming moiety of GSDMB, thereby triggering pyroptosis and target cell death (PubMed:32299851, PubMed:34022140, PubMed:36157507, PubMed:36899106). Cleaves APEX1 after 'Lys-31' and destroys its oxidative repair activity (PubMed:12524539). Cleaves the nucleosome assembly protein SET after 'Lys-189', which disrupts its nucleosome assembly activity and allows the SET complex to translocate into the nucleus to nick and degrade the DNA (PubMed:11555662, PubMed:12628186, PubMed:16818237).</text>
</comment>
<comment type="catalytic activity">
    <reaction evidence="7 14 18 19">
        <text>Hydrolysis of proteins, including fibronectin, type IV collagen and nucleolin. Preferential cleavage: -Arg-|-Xaa-, -Lys-|-Xaa- &gt;&gt; -Phe-|-Xaa- in small molecule substrates.</text>
        <dbReference type="EC" id="3.4.21.78"/>
    </reaction>
</comment>
<comment type="subunit">
    <text evidence="4 6 7">Homodimer; disulfide-linked (PubMed:12819769, PubMed:12819770). Interacts with APEX1 (PubMed:12524539).</text>
</comment>
<comment type="subcellular location">
    <molecule>Isoform alpha</molecule>
    <subcellularLocation>
        <location evidence="15">Secreted</location>
    </subcellularLocation>
    <subcellularLocation>
        <location evidence="15">Cytoplasmic granule</location>
    </subcellularLocation>
    <text evidence="12 14">Delivered into the target cell by perforin.</text>
</comment>
<comment type="alternative products">
    <event type="alternative promoter"/>
    <isoform>
        <id>P12544-1</id>
        <name evidence="22">alpha</name>
        <sequence type="displayed"/>
    </isoform>
    <isoform>
        <id>P12544-2</id>
        <name evidence="22">beta</name>
        <sequence type="described" ref="VSP_038571 VSP_038572"/>
    </isoform>
</comment>
<comment type="induction">
    <text evidence="10">Dexamethasone (DEX) induces expression of isoform beta and represses expression of isoform alpha. The alteration in expression is mediated by binding of glucocorticoid receptor to independent promoters adjacent to the alternative first exons of isoform alpha and isoform beta.</text>
</comment>
<comment type="similarity">
    <text evidence="2">Belongs to the peptidase S1 family. Granzyme subfamily.</text>
</comment>
<comment type="caution">
    <text evidence="29">Exons 1a and 1b of the sequence reported in PubMed:17180578 are of human origin, however exon 2 shows strong similarity to the rat sequence.</text>
</comment>
<comment type="online information" name="Atlas of Genetics and Cytogenetics in Oncology and Haematology">
    <link uri="https://atlasgeneticsoncology.org/gene/51130/GZMA"/>
</comment>
<proteinExistence type="evidence at protein level"/>
<evidence type="ECO:0000255" key="1"/>
<evidence type="ECO:0000255" key="2">
    <source>
        <dbReference type="PROSITE-ProRule" id="PRU00274"/>
    </source>
</evidence>
<evidence type="ECO:0000269" key="3">
    <source>
    </source>
</evidence>
<evidence type="ECO:0000269" key="4">
    <source>
    </source>
</evidence>
<evidence type="ECO:0000269" key="5">
    <source>
    </source>
</evidence>
<evidence type="ECO:0000269" key="6">
    <source>
    </source>
</evidence>
<evidence type="ECO:0000269" key="7">
    <source>
    </source>
</evidence>
<evidence type="ECO:0000269" key="8">
    <source>
    </source>
</evidence>
<evidence type="ECO:0000269" key="9">
    <source>
    </source>
</evidence>
<evidence type="ECO:0000269" key="10">
    <source>
    </source>
</evidence>
<evidence type="ECO:0000269" key="11">
    <source>
    </source>
</evidence>
<evidence type="ECO:0000269" key="12">
    <source>
    </source>
</evidence>
<evidence type="ECO:0000269" key="13">
    <source>
    </source>
</evidence>
<evidence type="ECO:0000269" key="14">
    <source>
    </source>
</evidence>
<evidence type="ECO:0000269" key="15">
    <source>
    </source>
</evidence>
<evidence type="ECO:0000269" key="16">
    <source>
    </source>
</evidence>
<evidence type="ECO:0000269" key="17">
    <source>
    </source>
</evidence>
<evidence type="ECO:0000269" key="18">
    <source>
    </source>
</evidence>
<evidence type="ECO:0000269" key="19">
    <source>
    </source>
</evidence>
<evidence type="ECO:0000269" key="20">
    <source>
    </source>
</evidence>
<evidence type="ECO:0000269" key="21">
    <source ref="2"/>
</evidence>
<evidence type="ECO:0000303" key="22">
    <source>
    </source>
</evidence>
<evidence type="ECO:0000303" key="23">
    <source>
    </source>
</evidence>
<evidence type="ECO:0000303" key="24">
    <source>
    </source>
</evidence>
<evidence type="ECO:0000303" key="25">
    <source>
    </source>
</evidence>
<evidence type="ECO:0000303" key="26">
    <source>
    </source>
</evidence>
<evidence type="ECO:0000303" key="27">
    <source>
    </source>
</evidence>
<evidence type="ECO:0000305" key="28"/>
<evidence type="ECO:0000305" key="29">
    <source>
    </source>
</evidence>
<evidence type="ECO:0000305" key="30">
    <source>
    </source>
</evidence>
<evidence type="ECO:0000312" key="31">
    <source>
        <dbReference type="HGNC" id="HGNC:4708"/>
    </source>
</evidence>
<evidence type="ECO:0007744" key="32">
    <source>
        <dbReference type="PDB" id="1OP8"/>
    </source>
</evidence>
<evidence type="ECO:0007744" key="33">
    <source>
        <dbReference type="PDB" id="1ORF"/>
    </source>
</evidence>
<evidence type="ECO:0007829" key="34">
    <source>
        <dbReference type="PDB" id="1ORF"/>
    </source>
</evidence>
<gene>
    <name evidence="24 31" type="primary">GZMA</name>
    <name type="synonym">CTLA3</name>
    <name type="synonym">HFSP</name>
</gene>
<reference key="1">
    <citation type="journal article" date="1988" name="Proc. Natl. Acad. Sci. U.S.A.">
        <title>Cloning and chromosomal assignment of a human cDNA encoding a T cell- and natural killer cell-specific trypsin-like serine protease.</title>
        <authorList>
            <person name="Gershenfeld H.K."/>
            <person name="Hershberger R.J."/>
            <person name="Shows T.B."/>
            <person name="Weissman I.L."/>
        </authorList>
    </citation>
    <scope>NUCLEOTIDE SEQUENCE [MRNA] (ISOFORM ALPHA)</scope>
    <scope>FUNCTION</scope>
    <scope>SUBCELLULAR LOCATION</scope>
    <scope>VARIANT THR-121</scope>
    <source>
        <tissue>T-cell</tissue>
    </source>
</reference>
<reference key="2">
    <citation type="submission" date="2004-06" db="EMBL/GenBank/DDBJ databases">
        <title>Cloning of human full open reading frames in Gateway(TM) system entry vector (pDONR201).</title>
        <authorList>
            <person name="Ebert L."/>
            <person name="Schick M."/>
            <person name="Neubert P."/>
            <person name="Schatten R."/>
            <person name="Henze S."/>
            <person name="Korn B."/>
        </authorList>
    </citation>
    <scope>NUCLEOTIDE SEQUENCE [LARGE SCALE MRNA] (ISOFORM ALPHA)</scope>
    <scope>VARIANT THR-121</scope>
</reference>
<reference key="3">
    <citation type="journal article" date="2004" name="Nature">
        <title>The DNA sequence and comparative analysis of human chromosome 5.</title>
        <authorList>
            <person name="Schmutz J."/>
            <person name="Martin J."/>
            <person name="Terry A."/>
            <person name="Couronne O."/>
            <person name="Grimwood J."/>
            <person name="Lowry S."/>
            <person name="Gordon L.A."/>
            <person name="Scott D."/>
            <person name="Xie G."/>
            <person name="Huang W."/>
            <person name="Hellsten U."/>
            <person name="Tran-Gyamfi M."/>
            <person name="She X."/>
            <person name="Prabhakar S."/>
            <person name="Aerts A."/>
            <person name="Altherr M."/>
            <person name="Bajorek E."/>
            <person name="Black S."/>
            <person name="Branscomb E."/>
            <person name="Caoile C."/>
            <person name="Challacombe J.F."/>
            <person name="Chan Y.M."/>
            <person name="Denys M."/>
            <person name="Detter J.C."/>
            <person name="Escobar J."/>
            <person name="Flowers D."/>
            <person name="Fotopulos D."/>
            <person name="Glavina T."/>
            <person name="Gomez M."/>
            <person name="Gonzales E."/>
            <person name="Goodstein D."/>
            <person name="Grigoriev I."/>
            <person name="Groza M."/>
            <person name="Hammon N."/>
            <person name="Hawkins T."/>
            <person name="Haydu L."/>
            <person name="Israni S."/>
            <person name="Jett J."/>
            <person name="Kadner K."/>
            <person name="Kimball H."/>
            <person name="Kobayashi A."/>
            <person name="Lopez F."/>
            <person name="Lou Y."/>
            <person name="Martinez D."/>
            <person name="Medina C."/>
            <person name="Morgan J."/>
            <person name="Nandkeshwar R."/>
            <person name="Noonan J.P."/>
            <person name="Pitluck S."/>
            <person name="Pollard M."/>
            <person name="Predki P."/>
            <person name="Priest J."/>
            <person name="Ramirez L."/>
            <person name="Retterer J."/>
            <person name="Rodriguez A."/>
            <person name="Rogers S."/>
            <person name="Salamov A."/>
            <person name="Salazar A."/>
            <person name="Thayer N."/>
            <person name="Tice H."/>
            <person name="Tsai M."/>
            <person name="Ustaszewska A."/>
            <person name="Vo N."/>
            <person name="Wheeler J."/>
            <person name="Wu K."/>
            <person name="Yang J."/>
            <person name="Dickson M."/>
            <person name="Cheng J.-F."/>
            <person name="Eichler E.E."/>
            <person name="Olsen A."/>
            <person name="Pennacchio L.A."/>
            <person name="Rokhsar D.S."/>
            <person name="Richardson P."/>
            <person name="Lucas S.M."/>
            <person name="Myers R.M."/>
            <person name="Rubin E.M."/>
        </authorList>
    </citation>
    <scope>NUCLEOTIDE SEQUENCE [LARGE SCALE GENOMIC DNA]</scope>
</reference>
<reference key="4">
    <citation type="journal article" date="2004" name="Genome Res.">
        <title>The status, quality, and expansion of the NIH full-length cDNA project: the Mammalian Gene Collection (MGC).</title>
        <authorList>
            <consortium name="The MGC Project Team"/>
        </authorList>
    </citation>
    <scope>NUCLEOTIDE SEQUENCE [LARGE SCALE MRNA] (ISOFORM ALPHA)</scope>
    <scope>VARIANT THR-121</scope>
    <source>
        <tissue>Blood</tissue>
    </source>
</reference>
<reference key="5">
    <citation type="journal article" date="2007" name="J. Hum. Genet.">
        <title>Glucocorticoid-induced alternative promoter usage for a novel 5' variant of granzyme A.</title>
        <authorList>
            <person name="Ruike Y."/>
            <person name="Katsuma S."/>
            <person name="Hirasawa A."/>
            <person name="Tsujimoto G."/>
        </authorList>
    </citation>
    <scope>NUCLEOTIDE SEQUENCE [GENOMIC DNA] OF 1-72</scope>
    <scope>NUCLEOTIDE SEQUENCE [MRNA] OF 1-34 (ISOFORM BETA)</scope>
    <scope>ALTERNATIVE PROMOTER USAGE</scope>
    <scope>INDUCTION</scope>
</reference>
<reference key="6">
    <citation type="submission" date="1995-11" db="EMBL/GenBank/DDBJ databases">
        <title>The upstream region of the human granzyme A locus contains both positive and negative transcriptional regulatory elements.</title>
        <authorList>
            <person name="Goralski T.J."/>
            <person name="Krensky A.M."/>
        </authorList>
    </citation>
    <scope>NUCLEOTIDE SEQUENCE [GENOMIC DNA] OF 1-23</scope>
</reference>
<reference key="7">
    <citation type="journal article" date="1988" name="J. Biol. Chem.">
        <title>Human cytotoxic lymphocyte tryptase. Its purification from granules and the characterization of inhibitor and substrate specificity.</title>
        <authorList>
            <person name="Poe M."/>
            <person name="Bennett C.D."/>
            <person name="Biddison W.E."/>
            <person name="Blake J.T."/>
            <person name="Norton G.P."/>
            <person name="Rodkey J.A."/>
            <person name="Sigal N.H."/>
            <person name="Turner R.V."/>
            <person name="Wu J.K."/>
            <person name="Zweerink H.J."/>
        </authorList>
    </citation>
    <scope>PROTEIN SEQUENCE OF 29-53</scope>
</reference>
<reference key="8">
    <citation type="journal article" date="1988" name="J. Immunol.">
        <title>Characterization of three serine esterases isolated from human IL-2 activated killer cells.</title>
        <authorList>
            <person name="Hameed A."/>
            <person name="Lowrey D.M."/>
            <person name="Lichtenheld M."/>
            <person name="Podack E.R."/>
        </authorList>
    </citation>
    <scope>PROTEIN SEQUENCE OF 29-40</scope>
    <scope>FUNCTION</scope>
</reference>
<reference key="9">
    <citation type="journal article" date="1988" name="J. Immunol.">
        <title>Characterization of granzymes A and B isolated from granules of cloned human cytotoxic T lymphocytes.</title>
        <authorList>
            <person name="Kraehenbuhl O."/>
            <person name="Rey C."/>
            <person name="Jenne D.E."/>
            <person name="Lanzavecchia A."/>
            <person name="Groscurth P."/>
            <person name="Carrel S."/>
            <person name="Tschopp J."/>
        </authorList>
    </citation>
    <scope>PROTEIN SEQUENCE OF 29-39</scope>
    <scope>FUNCTION</scope>
</reference>
<reference key="10">
    <citation type="journal article" date="2001" name="J. Biol. Chem.">
        <title>Granzyme A activates an endoplasmic reticulum-associated caspase-independent nuclease to induce single-stranded DNA nicks.</title>
        <authorList>
            <person name="Beresford P.J."/>
            <person name="Zhang D."/>
            <person name="Oh D.Y."/>
            <person name="Fan Z."/>
            <person name="Greer E.L."/>
            <person name="Russo M.L."/>
            <person name="Jaju M."/>
            <person name="Lieberman J."/>
        </authorList>
    </citation>
    <scope>FUNCTION AS SET PROTEASE</scope>
</reference>
<reference key="11">
    <citation type="journal article" date="2003" name="Cell">
        <title>Tumor suppressor NM23-H1 is a granzyme A-activated DNase during CTL-mediated apoptosis, and the nucleosome assembly protein SET is its inhibitor.</title>
        <authorList>
            <person name="Fan Z."/>
            <person name="Beresford P.J."/>
            <person name="Oh D.Y."/>
            <person name="Zhang D."/>
            <person name="Lieberman J."/>
        </authorList>
    </citation>
    <scope>FUNCTION AS SET PROTEASE</scope>
</reference>
<reference key="12">
    <citation type="journal article" date="2003" name="Nat. Immunol.">
        <title>Cleaving the oxidative repair protein Ape1 enhances cell death mediated by granzyme A.</title>
        <authorList>
            <person name="Fan Z."/>
            <person name="Beresford P.J."/>
            <person name="Zhang D."/>
            <person name="Xu Z."/>
            <person name="Novina C.D."/>
            <person name="Yoshida A."/>
            <person name="Pommier Y."/>
            <person name="Lieberman J."/>
        </authorList>
    </citation>
    <scope>FUNCTION</scope>
    <scope>INTERACTION WITH APEX1</scope>
</reference>
<reference key="13">
    <citation type="journal article" date="2006" name="Mol. Cell">
        <title>The exonuclease TREX1 is in the SET complex and acts in concert with NM23-H1 to degrade DNA during granzyme A-mediated cell death.</title>
        <authorList>
            <person name="Chowdhury D."/>
            <person name="Beresford P.J."/>
            <person name="Zhu P."/>
            <person name="Zhang D."/>
            <person name="Sung J.S."/>
            <person name="Demple B."/>
            <person name="Perrino F.W."/>
            <person name="Lieberman J."/>
        </authorList>
    </citation>
    <scope>FUNCTION AS SET PROTEASE</scope>
</reference>
<reference key="14">
    <citation type="journal article" date="2009" name="J. Proteome Res.">
        <title>Glycoproteomics analysis of human liver tissue by combination of multiple enzyme digestion and hydrazide chemistry.</title>
        <authorList>
            <person name="Chen R."/>
            <person name="Jiang X."/>
            <person name="Sun D."/>
            <person name="Han G."/>
            <person name="Wang F."/>
            <person name="Ye M."/>
            <person name="Wang L."/>
            <person name="Zou H."/>
        </authorList>
    </citation>
    <scope>GLYCOSYLATION [LARGE SCALE ANALYSIS] AT ASN-170</scope>
    <source>
        <tissue>Liver</tissue>
    </source>
</reference>
<reference key="15">
    <citation type="journal article" date="2010" name="Blood">
        <title>Perforin activates clathrin- and dynamin-dependent endocytosis, which is required for plasma membrane repair and delivery of granzyme B for granzyme-mediated apoptosis.</title>
        <authorList>
            <person name="Thiery J."/>
            <person name="Keefe D."/>
            <person name="Saffarian S."/>
            <person name="Martinvalet D."/>
            <person name="Walch M."/>
            <person name="Boucrot E."/>
            <person name="Kirchhausen T."/>
            <person name="Lieberman J."/>
        </authorList>
    </citation>
    <scope>SUBCELLULAR LOCATION</scope>
</reference>
<reference key="16">
    <citation type="journal article" date="2020" name="Science">
        <title>Granzyme A from cytotoxic lymphocytes cleaves GSDMB to trigger pyroptosis in target cells.</title>
        <authorList>
            <person name="Zhou Z."/>
            <person name="He H."/>
            <person name="Wang K."/>
            <person name="Shi X."/>
            <person name="Wang Y."/>
            <person name="Su Y."/>
            <person name="Wang Y."/>
            <person name="Li D."/>
            <person name="Liu W."/>
            <person name="Zhang Y."/>
            <person name="Shen L."/>
            <person name="Han W."/>
            <person name="Shen L."/>
            <person name="Ding J."/>
            <person name="Shao F."/>
        </authorList>
    </citation>
    <scope>FUNCTION</scope>
    <scope>SUBCELLULAR LOCATION</scope>
    <scope>CATALYTIC ACTIVITY</scope>
    <scope>ACTIVE SITE</scope>
    <scope>MUTAGENESIS OF SER-212</scope>
</reference>
<reference key="17">
    <citation type="journal article" date="2021" name="Cell">
        <title>Pathogenic ubiquitination of GSDMB inhibits NK cell bactericidal functions.</title>
        <authorList>
            <person name="Hansen J.M."/>
            <person name="de Jong M.F."/>
            <person name="Wu Q."/>
            <person name="Zhang L.S."/>
            <person name="Heisler D.B."/>
            <person name="Alto L.T."/>
            <person name="Alto N.M."/>
        </authorList>
    </citation>
    <scope>FUNCTION</scope>
    <scope>CATALYTIC ACTIVITY</scope>
</reference>
<reference key="18">
    <citation type="journal article" date="2022" name="Genes Dis.">
        <title>GSDMB N-terminal assembles in plasma membrane to execute pyroptotic cell death.</title>
        <authorList>
            <person name="Gong W."/>
            <person name="Liu P."/>
            <person name="Liu J."/>
            <person name="Li Y."/>
            <person name="Zheng T."/>
            <person name="Wu X."/>
            <person name="Zhao Y."/>
            <person name="Ren J."/>
        </authorList>
    </citation>
    <scope>FUNCTION</scope>
    <scope>CATALYTIC ACTIVITY</scope>
</reference>
<reference key="19">
    <citation type="journal article" date="2023" name="Cell Death Differ.">
        <title>Distinct GSDMB protein isoforms and protease cleavage processes differentially control pyroptotic cell death and mitochondrial damage in cancer cells.</title>
        <authorList>
            <person name="Oltra S.S."/>
            <person name="Colomo S."/>
            <person name="Sin L."/>
            <person name="Perez-Lopez M."/>
            <person name="Lazaro S."/>
            <person name="Molina-Crespo A."/>
            <person name="Choi K.H."/>
            <person name="Ros-Pardo D."/>
            <person name="Martinez L."/>
            <person name="Morales S."/>
            <person name="Gonzalez-Paramos C."/>
            <person name="Orantes A."/>
            <person name="Soriano M."/>
            <person name="Hernandez A."/>
            <person name="Lluch A."/>
            <person name="Rojo F."/>
            <person name="Albanell J."/>
            <person name="Gomez-Puertas P."/>
            <person name="Ko J.K."/>
            <person name="Sarrio D."/>
            <person name="Moreno-Bueno G."/>
        </authorList>
    </citation>
    <scope>FUNCTION</scope>
    <scope>CATALYTIC ACTIVITY</scope>
</reference>
<reference key="20">
    <citation type="journal article" date="1988" name="Proteins">
        <title>Comparative molecular model building of two serine proteinases from cytotoxic T lymphocytes.</title>
        <authorList>
            <person name="Murphy M.E.P."/>
            <person name="Moult J."/>
            <person name="Bleackley R.C."/>
            <person name="Gershenfeld H."/>
            <person name="Weissman I.L."/>
            <person name="James M.N.G."/>
        </authorList>
    </citation>
    <scope>3D-STRUCTURE MODELING OF 29-262</scope>
</reference>
<reference key="21">
    <citation type="journal article" date="2003" name="Nat. Struct. Biol.">
        <title>The oligomeric structure of human granzyme A is a determinant of its extended substrate specificity.</title>
        <authorList>
            <person name="Bell J.K."/>
            <person name="Goetz D.H."/>
            <person name="Mahrus S."/>
            <person name="Harris J.L."/>
            <person name="Fletterick R.J."/>
            <person name="Craik C.S."/>
        </authorList>
    </citation>
    <scope>X-RAY CRYSTALLOGRAPHY (2.4 ANGSTROMS) OF 29-262 IN COMPLEX WITH A TRIPEPTIDE CMK INHIBITOR</scope>
    <scope>DISULFIDE BONDS</scope>
</reference>
<reference key="22">
    <citation type="journal article" date="2003" name="Nat. Struct. Biol.">
        <title>Crystal structure of the apoptosis-inducing human granzyme A dimer.</title>
        <authorList>
            <person name="Hink-Schauer C."/>
            <person name="Estebanez-Perpina E."/>
            <person name="Kurschus F.C."/>
            <person name="Bode W."/>
            <person name="Jenne D.E."/>
        </authorList>
    </citation>
    <scope>X-RAY CRYSTALLOGRAPHY (2.5 ANGSTROMS) OF 29-262 IN COMPLEX WITH SUBSTRATE</scope>
    <scope>FUNCTION</scope>
    <scope>CATALYTIC ACTIVITY</scope>
    <scope>DISULFIDE BONDS</scope>
</reference>
<feature type="signal peptide" evidence="1">
    <location>
        <begin position="1"/>
        <end position="26"/>
    </location>
</feature>
<feature type="propeptide" id="PRO_0000027393" description="Activation peptide" evidence="13 16 17">
    <location>
        <begin position="27"/>
        <end position="28"/>
    </location>
</feature>
<feature type="chain" id="PRO_0000027394" description="Granzyme A">
    <location>
        <begin position="29"/>
        <end position="262"/>
    </location>
</feature>
<feature type="domain" description="Peptidase S1" evidence="2">
    <location>
        <begin position="29"/>
        <end position="259"/>
    </location>
</feature>
<feature type="active site" description="Charge relay system" evidence="6 7">
    <location>
        <position position="69"/>
    </location>
</feature>
<feature type="active site" description="Charge relay system" evidence="6 7">
    <location>
        <position position="114"/>
    </location>
</feature>
<feature type="active site" description="Charge relay system" evidence="6 7 30">
    <location>
        <position position="212"/>
    </location>
</feature>
<feature type="glycosylation site" description="N-linked (GlcNAc...) asparagine" evidence="11">
    <location>
        <position position="170"/>
    </location>
</feature>
<feature type="disulfide bond" evidence="6 7 32 33">
    <location>
        <begin position="54"/>
        <end position="70"/>
    </location>
</feature>
<feature type="disulfide bond" evidence="6 7 32 33">
    <location>
        <begin position="148"/>
        <end position="218"/>
    </location>
</feature>
<feature type="disulfide bond" evidence="6 7 32 33">
    <location>
        <begin position="179"/>
        <end position="197"/>
    </location>
</feature>
<feature type="disulfide bond" evidence="6 7 32 33">
    <location>
        <begin position="208"/>
        <end position="234"/>
    </location>
</feature>
<feature type="splice variant" id="VSP_038571" description="In isoform beta." evidence="22">
    <location>
        <begin position="1"/>
        <end position="17"/>
    </location>
</feature>
<feature type="splice variant" id="VSP_038572" description="In isoform beta." evidence="22">
    <original>LLLIPE</original>
    <variation>MTKGLR</variation>
    <location>
        <begin position="18"/>
        <end position="23"/>
    </location>
</feature>
<feature type="sequence variant" id="VAR_024291" description="In dbSNP:rs3104233." evidence="8 15 21">
    <original>M</original>
    <variation>T</variation>
    <location>
        <position position="121"/>
    </location>
</feature>
<feature type="mutagenesis site" description="Abolished protease activity." evidence="14">
    <original>S</original>
    <variation>A</variation>
    <location>
        <position position="212"/>
    </location>
</feature>
<feature type="sequence conflict" description="In Ref. 5; no nucleotide entry." evidence="28" ref="5">
    <original>NE</original>
    <variation>DT</variation>
    <location>
        <begin position="33"/>
        <end position="34"/>
    </location>
</feature>
<feature type="sequence conflict" description="In Ref. 5; no nucleotide entry." evidence="28" ref="5">
    <original>T</original>
    <variation>V</variation>
    <location>
        <position position="36"/>
    </location>
</feature>
<feature type="sequence conflict" description="In Ref. 5; no nucleotide entry." evidence="28" ref="5">
    <original>S</original>
    <variation>K</variation>
    <location>
        <position position="47"/>
    </location>
</feature>
<feature type="sequence conflict" description="In Ref. 5; no nucleotide entry." evidence="28" ref="5">
    <original>DRKT</original>
    <variation>KPDS</variation>
    <location>
        <begin position="49"/>
        <end position="52"/>
    </location>
</feature>
<feature type="sequence conflict" description="In Ref. 5; no nucleotide entry." evidence="28" ref="5">
    <original>D</original>
    <variation>N</variation>
    <location>
        <position position="62"/>
    </location>
</feature>
<feature type="sequence conflict" description="In Ref. 5; no nucleotide entry." evidence="28" ref="5">
    <original>NL</original>
    <variation>IP</variation>
    <location>
        <begin position="71"/>
        <end position="72"/>
    </location>
</feature>
<feature type="strand" evidence="34">
    <location>
        <begin position="43"/>
        <end position="47"/>
    </location>
</feature>
<feature type="strand" evidence="34">
    <location>
        <begin position="49"/>
        <end position="51"/>
    </location>
</feature>
<feature type="strand" evidence="34">
    <location>
        <begin position="53"/>
        <end position="60"/>
    </location>
</feature>
<feature type="strand" evidence="34">
    <location>
        <begin position="63"/>
        <end position="66"/>
    </location>
</feature>
<feature type="strand" evidence="34">
    <location>
        <begin position="77"/>
        <end position="81"/>
    </location>
</feature>
<feature type="strand" evidence="34">
    <location>
        <begin position="83"/>
        <end position="87"/>
    </location>
</feature>
<feature type="strand" evidence="34">
    <location>
        <begin position="93"/>
        <end position="95"/>
    </location>
</feature>
<feature type="strand" evidence="34">
    <location>
        <begin position="97"/>
        <end position="102"/>
    </location>
</feature>
<feature type="turn" evidence="34">
    <location>
        <begin position="108"/>
        <end position="110"/>
    </location>
</feature>
<feature type="strand" evidence="34">
    <location>
        <begin position="116"/>
        <end position="122"/>
    </location>
</feature>
<feature type="strand" evidence="34">
    <location>
        <begin position="127"/>
        <end position="130"/>
    </location>
</feature>
<feature type="strand" evidence="34">
    <location>
        <begin position="147"/>
        <end position="154"/>
    </location>
</feature>
<feature type="strand" evidence="34">
    <location>
        <begin position="156"/>
        <end position="160"/>
    </location>
</feature>
<feature type="strand" evidence="34">
    <location>
        <begin position="167"/>
        <end position="174"/>
    </location>
</feature>
<feature type="helix" evidence="34">
    <location>
        <begin position="176"/>
        <end position="179"/>
    </location>
</feature>
<feature type="turn" evidence="34">
    <location>
        <begin position="182"/>
        <end position="189"/>
    </location>
</feature>
<feature type="strand" evidence="34">
    <location>
        <begin position="195"/>
        <end position="199"/>
    </location>
</feature>
<feature type="strand" evidence="34">
    <location>
        <begin position="215"/>
        <end position="218"/>
    </location>
</feature>
<feature type="strand" evidence="34">
    <location>
        <begin position="221"/>
        <end position="228"/>
    </location>
</feature>
<feature type="strand" evidence="34">
    <location>
        <begin position="241"/>
        <end position="245"/>
    </location>
</feature>
<feature type="helix" evidence="34">
    <location>
        <begin position="248"/>
        <end position="258"/>
    </location>
</feature>
<name>GRAA_HUMAN</name>
<sequence length="262" mass="28999">MRNSYRFLASSLSVVVSLLLIPEDVCEKIIGGNEVTPHSRPYMVLLSLDRKTICAGALIAKDWVLTAAHCNLNKRSQVILGAHSITREEPTKQIMLVKKEFPYPCYDPATREGDLKLLQLMEKAKINKYVTILHLPKKGDDVKPGTMCQVAGWGRTHNSASWSDTLREVNITIIDRKVCNDRNHYNFNPVIGMNMVCAGSLRGGRDSCNGDSGSPLLCEGVFRGVTSFGLENKCGDPRGPGVYILLSKKHLNWIIMTIKGAV</sequence>
<organism>
    <name type="scientific">Homo sapiens</name>
    <name type="common">Human</name>
    <dbReference type="NCBI Taxonomy" id="9606"/>
    <lineage>
        <taxon>Eukaryota</taxon>
        <taxon>Metazoa</taxon>
        <taxon>Chordata</taxon>
        <taxon>Craniata</taxon>
        <taxon>Vertebrata</taxon>
        <taxon>Euteleostomi</taxon>
        <taxon>Mammalia</taxon>
        <taxon>Eutheria</taxon>
        <taxon>Euarchontoglires</taxon>
        <taxon>Primates</taxon>
        <taxon>Haplorrhini</taxon>
        <taxon>Catarrhini</taxon>
        <taxon>Hominidae</taxon>
        <taxon>Homo</taxon>
    </lineage>
</organism>
<keyword id="KW-0002">3D-structure</keyword>
<keyword id="KW-0877">Alternative promoter usage</keyword>
<keyword id="KW-0204">Cytolysis</keyword>
<keyword id="KW-0903">Direct protein sequencing</keyword>
<keyword id="KW-1015">Disulfide bond</keyword>
<keyword id="KW-0325">Glycoprotein</keyword>
<keyword id="KW-0378">Hydrolase</keyword>
<keyword id="KW-0645">Protease</keyword>
<keyword id="KW-1267">Proteomics identification</keyword>
<keyword id="KW-1185">Reference proteome</keyword>
<keyword id="KW-0964">Secreted</keyword>
<keyword id="KW-0720">Serine protease</keyword>
<keyword id="KW-0732">Signal</keyword>
<keyword id="KW-0865">Zymogen</keyword>